<name>PLS1_PHYSA</name>
<keyword id="KW-0027">Amidation</keyword>
<keyword id="KW-0878">Amphibian defense peptide</keyword>
<keyword id="KW-0044">Antibiotic</keyword>
<keyword id="KW-0929">Antimicrobial</keyword>
<keyword id="KW-0165">Cleavage on pair of basic residues</keyword>
<keyword id="KW-0204">Cytolysis</keyword>
<keyword id="KW-0903">Direct protein sequencing</keyword>
<keyword id="KW-0295">Fungicide</keyword>
<keyword id="KW-0354">Hemolysis</keyword>
<keyword id="KW-0391">Immunity</keyword>
<keyword id="KW-0399">Innate immunity</keyword>
<keyword id="KW-0472">Membrane</keyword>
<keyword id="KW-0964">Secreted</keyword>
<keyword id="KW-0732">Signal</keyword>
<keyword id="KW-1052">Target cell membrane</keyword>
<keyword id="KW-1053">Target membrane</keyword>
<sequence length="66" mass="7564">MAFLKKSLFLVLFLGLVSLSICEEEKRETEEEEHDQEEDDKSEEKRFLSLIPHIVSGVASIAKHFG</sequence>
<feature type="signal peptide" evidence="1">
    <location>
        <begin position="1"/>
        <end position="22"/>
    </location>
</feature>
<feature type="propeptide" id="PRO_0000449585" evidence="8 9">
    <location>
        <begin position="23"/>
        <end position="46"/>
    </location>
</feature>
<feature type="peptide" id="PRO_5003363395" description="Phylloseptin-S1" evidence="3 4">
    <location>
        <begin position="47"/>
        <end position="65"/>
    </location>
</feature>
<feature type="region of interest" description="Disordered" evidence="2">
    <location>
        <begin position="25"/>
        <end position="44"/>
    </location>
</feature>
<feature type="compositionally biased region" description="Acidic residues" evidence="2">
    <location>
        <begin position="30"/>
        <end position="41"/>
    </location>
</feature>
<feature type="modified residue" description="Phenylalanine amide" evidence="4 8">
    <location>
        <position position="65"/>
    </location>
</feature>
<feature type="sequence conflict" description="In Ref. 1; CBJ56559." evidence="7" ref="1">
    <original>AF</original>
    <variation>DI</variation>
    <location>
        <begin position="2"/>
        <end position="3"/>
    </location>
</feature>
<reference key="1">
    <citation type="journal article" date="2010" name="Mol. Immunol.">
        <title>Phylloseptin-1 (PSN-1) from Phyllomedusa sauvagei skin secretion: a novel broad-spectrum antimicrobial peptide with antibiofilm activity.</title>
        <authorList>
            <person name="Zhang R."/>
            <person name="Zhou M."/>
            <person name="Wang L."/>
            <person name="McGrath S."/>
            <person name="Chen T."/>
            <person name="Chen X."/>
            <person name="Shaw C."/>
        </authorList>
    </citation>
    <scope>NUCLEOTIDE SEQUENCE [MRNA]</scope>
    <scope>FUNCTION</scope>
    <scope>SYNTHESIS OF 47-65</scope>
    <scope>IDENTIFICATION BY MASS SPECTROMETRY</scope>
    <scope>AMIDATION AT PHE-65</scope>
    <source>
        <tissue>Skin secretion</tissue>
    </source>
</reference>
<reference key="2">
    <citation type="journal article" date="2013" name="PLoS ONE">
        <title>Structure, antimicrobial activities and mode of interaction with membranes of novel [corrected] phylloseptins from the painted-belly leaf frog, Phyllomedusa sauvagii.</title>
        <authorList>
            <person name="Raja Z."/>
            <person name="Andre S."/>
            <person name="Piesse C."/>
            <person name="Sereno D."/>
            <person name="Nicolas P."/>
            <person name="Foulon T."/>
            <person name="Oury B."/>
            <person name="Ladram A."/>
        </authorList>
    </citation>
    <scope>NUCLEOTIDE SEQUENCE [MRNA]</scope>
    <scope>PROTEIN SEQUENCE OF 47-65</scope>
    <scope>AMIDATION AT PHE-65</scope>
    <scope>SUBCELLULAR LOCATION</scope>
    <scope>MASS SPECTROMETRY</scope>
    <scope>BIOPHYSICOCHEMICAL PROPERTIES</scope>
    <source>
        <tissue>Skin secretion</tissue>
    </source>
</reference>
<organism>
    <name type="scientific">Phyllomedusa sauvagei</name>
    <name type="common">Sauvage's leaf frog</name>
    <dbReference type="NCBI Taxonomy" id="8395"/>
    <lineage>
        <taxon>Eukaryota</taxon>
        <taxon>Metazoa</taxon>
        <taxon>Chordata</taxon>
        <taxon>Craniata</taxon>
        <taxon>Vertebrata</taxon>
        <taxon>Euteleostomi</taxon>
        <taxon>Amphibia</taxon>
        <taxon>Batrachia</taxon>
        <taxon>Anura</taxon>
        <taxon>Neobatrachia</taxon>
        <taxon>Hyloidea</taxon>
        <taxon>Hylidae</taxon>
        <taxon>Phyllomedusinae</taxon>
        <taxon>Phyllomedusa</taxon>
    </lineage>
</organism>
<evidence type="ECO:0000255" key="1"/>
<evidence type="ECO:0000256" key="2">
    <source>
        <dbReference type="SAM" id="MobiDB-lite"/>
    </source>
</evidence>
<evidence type="ECO:0000269" key="3">
    <source>
    </source>
</evidence>
<evidence type="ECO:0000269" key="4">
    <source>
    </source>
</evidence>
<evidence type="ECO:0000303" key="5">
    <source>
    </source>
</evidence>
<evidence type="ECO:0000303" key="6">
    <source>
    </source>
</evidence>
<evidence type="ECO:0000305" key="7"/>
<evidence type="ECO:0000305" key="8">
    <source>
    </source>
</evidence>
<evidence type="ECO:0000305" key="9">
    <source>
    </source>
</evidence>
<accession>F7UI84</accession>
<accession>E3PQH3</accession>
<comment type="function">
    <text evidence="3 4">Antimicrobial peptide with high activity against Gram-positive bacteria, low activity against Gram-negative bacteria, and moderate activity against fungi (PubMed:20451254, PubMed:23967105). Acts on bacterial biofilms (S.aureus) with the same potency than on bacteria (PubMed:20451254). Acts by causing bacterial membrane disruption inducing leakage of the intracellular content followed by cell death (PubMed:23967105). It adopts an alpha-helical amphipathic structure in membrane environments (PubMed:23967105). Also shows highly potent antiparasitic activity against Leishmania species (PubMed:23967105). Shows low hemolytic activity on horse and human erythrocytes (LC(50)=39 uM) (PubMed:20451254, PubMed:23967105). Is also active on human monocytes (IC(50)=23 uM) (PubMed:23967105).</text>
</comment>
<comment type="biophysicochemical properties">
    <phDependence>
        <text evidence="4">Optimum pH is &lt;7. Is active against E.coli ATCC25922 at pH 5 (MIC=12.5 uM), whereas is almost not active at pH 7 (MIC=70 uM).</text>
    </phDependence>
</comment>
<comment type="subcellular location">
    <subcellularLocation>
        <location evidence="4">Secreted</location>
    </subcellularLocation>
    <subcellularLocation>
        <location evidence="4">Target cell membrane</location>
    </subcellularLocation>
    <text evidence="9">Forms a helical membrane channel in the target.</text>
</comment>
<comment type="tissue specificity">
    <text evidence="9">Expressed by the skin glands.</text>
</comment>
<comment type="mass spectrometry" mass="2035.16" method="MALDI" evidence="4"/>
<comment type="similarity">
    <text evidence="7">Belongs to the frog skin active peptide (FSAP) family. Phylloseptin subfamily.</text>
</comment>
<comment type="online information" name="The antimicrobial peptide database">
    <link uri="https://wangapd3.com/database/query_output.php?ID=1581"/>
</comment>
<dbReference type="EMBL" id="FN667968">
    <property type="protein sequence ID" value="CBJ56559.1"/>
    <property type="molecule type" value="mRNA"/>
</dbReference>
<dbReference type="EMBL" id="AM903077">
    <property type="protein sequence ID" value="CAP17490.1"/>
    <property type="molecule type" value="mRNA"/>
</dbReference>
<dbReference type="GO" id="GO:0005576">
    <property type="term" value="C:extracellular region"/>
    <property type="evidence" value="ECO:0007669"/>
    <property type="project" value="UniProtKB-SubCell"/>
</dbReference>
<dbReference type="GO" id="GO:0016020">
    <property type="term" value="C:membrane"/>
    <property type="evidence" value="ECO:0007669"/>
    <property type="project" value="UniProtKB-KW"/>
</dbReference>
<dbReference type="GO" id="GO:0044218">
    <property type="term" value="C:other organism cell membrane"/>
    <property type="evidence" value="ECO:0007669"/>
    <property type="project" value="UniProtKB-KW"/>
</dbReference>
<dbReference type="GO" id="GO:0042742">
    <property type="term" value="P:defense response to bacterium"/>
    <property type="evidence" value="ECO:0007669"/>
    <property type="project" value="UniProtKB-KW"/>
</dbReference>
<dbReference type="GO" id="GO:0050832">
    <property type="term" value="P:defense response to fungus"/>
    <property type="evidence" value="ECO:0007669"/>
    <property type="project" value="UniProtKB-KW"/>
</dbReference>
<dbReference type="GO" id="GO:0045087">
    <property type="term" value="P:innate immune response"/>
    <property type="evidence" value="ECO:0007669"/>
    <property type="project" value="UniProtKB-KW"/>
</dbReference>
<dbReference type="GO" id="GO:0031640">
    <property type="term" value="P:killing of cells of another organism"/>
    <property type="evidence" value="ECO:0007669"/>
    <property type="project" value="UniProtKB-KW"/>
</dbReference>
<dbReference type="InterPro" id="IPR004275">
    <property type="entry name" value="Frog_antimicrobial_propeptide"/>
</dbReference>
<dbReference type="InterPro" id="IPR016322">
    <property type="entry name" value="FSAP"/>
</dbReference>
<dbReference type="Pfam" id="PF03032">
    <property type="entry name" value="FSAP_sig_propep"/>
    <property type="match status" value="1"/>
</dbReference>
<dbReference type="PIRSF" id="PIRSF001822">
    <property type="entry name" value="Dermaseptin_precursor"/>
    <property type="match status" value="1"/>
</dbReference>
<proteinExistence type="evidence at protein level"/>
<protein>
    <recommendedName>
        <fullName evidence="6">Phylloseptin-S1</fullName>
        <shortName evidence="6">PLS-S1</shortName>
    </recommendedName>
    <alternativeName>
        <fullName evidence="5">Phylloseptin-1</fullName>
        <shortName evidence="5">PSN-1</shortName>
    </alternativeName>
</protein>